<protein>
    <recommendedName>
        <fullName evidence="1">Na(+)/H(+) antiporter NhaA</fullName>
    </recommendedName>
    <alternativeName>
        <fullName evidence="1">Sodium/proton antiporter NhaA</fullName>
    </alternativeName>
</protein>
<dbReference type="EMBL" id="CP000462">
    <property type="protein sequence ID" value="ABK38348.1"/>
    <property type="molecule type" value="Genomic_DNA"/>
</dbReference>
<dbReference type="RefSeq" id="WP_011704638.1">
    <property type="nucleotide sequence ID" value="NC_008570.1"/>
</dbReference>
<dbReference type="RefSeq" id="YP_855218.1">
    <property type="nucleotide sequence ID" value="NC_008570.1"/>
</dbReference>
<dbReference type="SMR" id="A0KG33"/>
<dbReference type="STRING" id="380703.AHA_0676"/>
<dbReference type="EnsemblBacteria" id="ABK38348">
    <property type="protein sequence ID" value="ABK38348"/>
    <property type="gene ID" value="AHA_0676"/>
</dbReference>
<dbReference type="GeneID" id="4490683"/>
<dbReference type="KEGG" id="aha:AHA_0676"/>
<dbReference type="PATRIC" id="fig|380703.7.peg.677"/>
<dbReference type="eggNOG" id="COG3004">
    <property type="taxonomic scope" value="Bacteria"/>
</dbReference>
<dbReference type="HOGENOM" id="CLU_015803_1_0_6"/>
<dbReference type="OrthoDB" id="9808135at2"/>
<dbReference type="Proteomes" id="UP000000756">
    <property type="component" value="Chromosome"/>
</dbReference>
<dbReference type="GO" id="GO:0005886">
    <property type="term" value="C:plasma membrane"/>
    <property type="evidence" value="ECO:0007669"/>
    <property type="project" value="UniProtKB-SubCell"/>
</dbReference>
<dbReference type="GO" id="GO:0015385">
    <property type="term" value="F:sodium:proton antiporter activity"/>
    <property type="evidence" value="ECO:0007669"/>
    <property type="project" value="TreeGrafter"/>
</dbReference>
<dbReference type="GO" id="GO:0006885">
    <property type="term" value="P:regulation of pH"/>
    <property type="evidence" value="ECO:0007669"/>
    <property type="project" value="InterPro"/>
</dbReference>
<dbReference type="Gene3D" id="1.20.1530.10">
    <property type="entry name" value="Na+/H+ antiporter like domain"/>
    <property type="match status" value="1"/>
</dbReference>
<dbReference type="HAMAP" id="MF_01844">
    <property type="entry name" value="NhaA"/>
    <property type="match status" value="1"/>
</dbReference>
<dbReference type="InterPro" id="IPR023171">
    <property type="entry name" value="Na/H_antiporter_dom_sf"/>
</dbReference>
<dbReference type="InterPro" id="IPR004670">
    <property type="entry name" value="NhaA"/>
</dbReference>
<dbReference type="NCBIfam" id="TIGR00773">
    <property type="entry name" value="NhaA"/>
    <property type="match status" value="1"/>
</dbReference>
<dbReference type="NCBIfam" id="NF007111">
    <property type="entry name" value="PRK09560.1"/>
    <property type="match status" value="1"/>
</dbReference>
<dbReference type="NCBIfam" id="NF007112">
    <property type="entry name" value="PRK09561.1"/>
    <property type="match status" value="1"/>
</dbReference>
<dbReference type="PANTHER" id="PTHR30341:SF0">
    <property type="entry name" value="NA(+)_H(+) ANTIPORTER NHAA"/>
    <property type="match status" value="1"/>
</dbReference>
<dbReference type="PANTHER" id="PTHR30341">
    <property type="entry name" value="SODIUM ION/PROTON ANTIPORTER NHAA-RELATED"/>
    <property type="match status" value="1"/>
</dbReference>
<dbReference type="Pfam" id="PF06965">
    <property type="entry name" value="Na_H_antiport_1"/>
    <property type="match status" value="1"/>
</dbReference>
<sequence>MSDVIKKFLKLEAASGIILIMAAMLAMILANSGLAGSYQAFLDTQVQVRIAALDINKPLLLWINDGFMAVFFLLVGLEVKREMLEGALSSRVQATFPAIAAVGGMLAPALIYAFFNYSDEVARAGWAIPAATDIAFALGVMALLGKRVPVSLKVFLLALAIMDDLGVIIIIALFYTQQLSLTALAIGILATLTLLWMNRRGEDRISLYMLVGLVLWVAVLKSGVHATLAGVIVGFMIPLSGKRYASPLKQLEHALHPWSAYLILPLFAFANAGVSLEGIGLSALLSPVPLGIMLGLFIGKPLGVFTISWLAVKLGIAQLPNGVNFKQIFAVSILCGIGFTMSMFIASLAFEHGGLDYGSYSRLGILVGSTLAAIVGYLALRIALPNREADQSTEGL</sequence>
<keyword id="KW-0050">Antiport</keyword>
<keyword id="KW-0997">Cell inner membrane</keyword>
<keyword id="KW-1003">Cell membrane</keyword>
<keyword id="KW-0406">Ion transport</keyword>
<keyword id="KW-0472">Membrane</keyword>
<keyword id="KW-1185">Reference proteome</keyword>
<keyword id="KW-0915">Sodium</keyword>
<keyword id="KW-0739">Sodium transport</keyword>
<keyword id="KW-0812">Transmembrane</keyword>
<keyword id="KW-1133">Transmembrane helix</keyword>
<keyword id="KW-0813">Transport</keyword>
<gene>
    <name evidence="1" type="primary">nhaA</name>
    <name type="ordered locus">AHA_0676</name>
</gene>
<proteinExistence type="inferred from homology"/>
<feature type="chain" id="PRO_0000334223" description="Na(+)/H(+) antiporter NhaA">
    <location>
        <begin position="1"/>
        <end position="396"/>
    </location>
</feature>
<feature type="transmembrane region" description="Helical" evidence="1">
    <location>
        <begin position="16"/>
        <end position="36"/>
    </location>
</feature>
<feature type="transmembrane region" description="Helical" evidence="1">
    <location>
        <begin position="59"/>
        <end position="79"/>
    </location>
</feature>
<feature type="transmembrane region" description="Helical" evidence="1">
    <location>
        <begin position="95"/>
        <end position="115"/>
    </location>
</feature>
<feature type="transmembrane region" description="Helical" evidence="1">
    <location>
        <begin position="124"/>
        <end position="144"/>
    </location>
</feature>
<feature type="transmembrane region" description="Helical" evidence="1">
    <location>
        <begin position="154"/>
        <end position="174"/>
    </location>
</feature>
<feature type="transmembrane region" description="Helical" evidence="1">
    <location>
        <begin position="178"/>
        <end position="198"/>
    </location>
</feature>
<feature type="transmembrane region" description="Helical" evidence="1">
    <location>
        <begin position="213"/>
        <end position="233"/>
    </location>
</feature>
<feature type="transmembrane region" description="Helical" evidence="1">
    <location>
        <begin position="254"/>
        <end position="274"/>
    </location>
</feature>
<feature type="transmembrane region" description="Helical" evidence="1">
    <location>
        <begin position="278"/>
        <end position="298"/>
    </location>
</feature>
<feature type="transmembrane region" description="Helical" evidence="1">
    <location>
        <begin position="328"/>
        <end position="348"/>
    </location>
</feature>
<feature type="transmembrane region" description="Helical" evidence="1">
    <location>
        <begin position="363"/>
        <end position="383"/>
    </location>
</feature>
<comment type="function">
    <text evidence="1">Na(+)/H(+) antiporter that extrudes sodium in exchange for external protons.</text>
</comment>
<comment type="catalytic activity">
    <reaction evidence="1">
        <text>Na(+)(in) + 2 H(+)(out) = Na(+)(out) + 2 H(+)(in)</text>
        <dbReference type="Rhea" id="RHEA:29251"/>
        <dbReference type="ChEBI" id="CHEBI:15378"/>
        <dbReference type="ChEBI" id="CHEBI:29101"/>
    </reaction>
    <physiologicalReaction direction="left-to-right" evidence="1">
        <dbReference type="Rhea" id="RHEA:29252"/>
    </physiologicalReaction>
</comment>
<comment type="subcellular location">
    <subcellularLocation>
        <location evidence="1">Cell inner membrane</location>
        <topology evidence="1">Multi-pass membrane protein</topology>
    </subcellularLocation>
</comment>
<comment type="similarity">
    <text evidence="1">Belongs to the NhaA Na(+)/H(+) (TC 2.A.33) antiporter family.</text>
</comment>
<accession>A0KG33</accession>
<name>NHAA_AERHH</name>
<reference key="1">
    <citation type="journal article" date="2006" name="J. Bacteriol.">
        <title>Genome sequence of Aeromonas hydrophila ATCC 7966T: jack of all trades.</title>
        <authorList>
            <person name="Seshadri R."/>
            <person name="Joseph S.W."/>
            <person name="Chopra A.K."/>
            <person name="Sha J."/>
            <person name="Shaw J."/>
            <person name="Graf J."/>
            <person name="Haft D.H."/>
            <person name="Wu M."/>
            <person name="Ren Q."/>
            <person name="Rosovitz M.J."/>
            <person name="Madupu R."/>
            <person name="Tallon L."/>
            <person name="Kim M."/>
            <person name="Jin S."/>
            <person name="Vuong H."/>
            <person name="Stine O.C."/>
            <person name="Ali A."/>
            <person name="Horneman A.J."/>
            <person name="Heidelberg J.F."/>
        </authorList>
    </citation>
    <scope>NUCLEOTIDE SEQUENCE [LARGE SCALE GENOMIC DNA]</scope>
    <source>
        <strain>ATCC 7966 / DSM 30187 / BCRC 13018 / CCUG 14551 / JCM 1027 / KCTC 2358 / NCIMB 9240 / NCTC 8049</strain>
    </source>
</reference>
<evidence type="ECO:0000255" key="1">
    <source>
        <dbReference type="HAMAP-Rule" id="MF_01844"/>
    </source>
</evidence>
<organism>
    <name type="scientific">Aeromonas hydrophila subsp. hydrophila (strain ATCC 7966 / DSM 30187 / BCRC 13018 / CCUG 14551 / JCM 1027 / KCTC 2358 / NCIMB 9240 / NCTC 8049)</name>
    <dbReference type="NCBI Taxonomy" id="380703"/>
    <lineage>
        <taxon>Bacteria</taxon>
        <taxon>Pseudomonadati</taxon>
        <taxon>Pseudomonadota</taxon>
        <taxon>Gammaproteobacteria</taxon>
        <taxon>Aeromonadales</taxon>
        <taxon>Aeromonadaceae</taxon>
        <taxon>Aeromonas</taxon>
    </lineage>
</organism>